<proteinExistence type="inferred from homology"/>
<dbReference type="EC" id="3.6.1.-" evidence="1"/>
<dbReference type="EMBL" id="BA000037">
    <property type="protein sequence ID" value="BAC94033.1"/>
    <property type="molecule type" value="Genomic_DNA"/>
</dbReference>
<dbReference type="RefSeq" id="WP_011149966.1">
    <property type="nucleotide sequence ID" value="NC_005139.1"/>
</dbReference>
<dbReference type="SMR" id="Q7MM04"/>
<dbReference type="STRING" id="672.VV93_v1c11860"/>
<dbReference type="KEGG" id="vvy:VV1269"/>
<dbReference type="PATRIC" id="fig|196600.6.peg.1261"/>
<dbReference type="eggNOG" id="COG0424">
    <property type="taxonomic scope" value="Bacteria"/>
</dbReference>
<dbReference type="HOGENOM" id="CLU_040416_1_0_6"/>
<dbReference type="Proteomes" id="UP000002675">
    <property type="component" value="Chromosome I"/>
</dbReference>
<dbReference type="GO" id="GO:0005737">
    <property type="term" value="C:cytoplasm"/>
    <property type="evidence" value="ECO:0007669"/>
    <property type="project" value="UniProtKB-SubCell"/>
</dbReference>
<dbReference type="GO" id="GO:0047429">
    <property type="term" value="F:nucleoside triphosphate diphosphatase activity"/>
    <property type="evidence" value="ECO:0007669"/>
    <property type="project" value="InterPro"/>
</dbReference>
<dbReference type="GO" id="GO:0009117">
    <property type="term" value="P:nucleotide metabolic process"/>
    <property type="evidence" value="ECO:0007669"/>
    <property type="project" value="UniProtKB-KW"/>
</dbReference>
<dbReference type="CDD" id="cd00555">
    <property type="entry name" value="Maf"/>
    <property type="match status" value="1"/>
</dbReference>
<dbReference type="FunFam" id="3.90.950.10:FF:000005">
    <property type="entry name" value="7-methyl-GTP pyrophosphatase"/>
    <property type="match status" value="1"/>
</dbReference>
<dbReference type="Gene3D" id="3.90.950.10">
    <property type="match status" value="1"/>
</dbReference>
<dbReference type="HAMAP" id="MF_00528">
    <property type="entry name" value="Maf"/>
    <property type="match status" value="1"/>
</dbReference>
<dbReference type="InterPro" id="IPR029001">
    <property type="entry name" value="ITPase-like_fam"/>
</dbReference>
<dbReference type="InterPro" id="IPR003697">
    <property type="entry name" value="Maf-like"/>
</dbReference>
<dbReference type="NCBIfam" id="TIGR00172">
    <property type="entry name" value="maf"/>
    <property type="match status" value="1"/>
</dbReference>
<dbReference type="PANTHER" id="PTHR43213:SF10">
    <property type="entry name" value="7-METHYL-GTP PYROPHOSPHATASE"/>
    <property type="match status" value="1"/>
</dbReference>
<dbReference type="PANTHER" id="PTHR43213">
    <property type="entry name" value="BIFUNCTIONAL DTTP/UTP PYROPHOSPHATASE/METHYLTRANSFERASE PROTEIN-RELATED"/>
    <property type="match status" value="1"/>
</dbReference>
<dbReference type="Pfam" id="PF02545">
    <property type="entry name" value="Maf"/>
    <property type="match status" value="1"/>
</dbReference>
<dbReference type="PIRSF" id="PIRSF006305">
    <property type="entry name" value="Maf"/>
    <property type="match status" value="1"/>
</dbReference>
<dbReference type="SUPFAM" id="SSF52972">
    <property type="entry name" value="ITPase-like"/>
    <property type="match status" value="1"/>
</dbReference>
<gene>
    <name type="ordered locus">VV1269</name>
</gene>
<comment type="function">
    <text evidence="1">Nucleoside triphosphate pyrophosphatase that hydrolyzes 7-methyl-GTP (m(7)GTP). May have a dual role in cell division arrest and in preventing the incorporation of modified nucleotides into cellular nucleic acids.</text>
</comment>
<comment type="catalytic activity">
    <reaction evidence="1">
        <text>N(7)-methyl-GTP + H2O = N(7)-methyl-GMP + diphosphate + H(+)</text>
        <dbReference type="Rhea" id="RHEA:58744"/>
        <dbReference type="ChEBI" id="CHEBI:15377"/>
        <dbReference type="ChEBI" id="CHEBI:15378"/>
        <dbReference type="ChEBI" id="CHEBI:33019"/>
        <dbReference type="ChEBI" id="CHEBI:58285"/>
        <dbReference type="ChEBI" id="CHEBI:87133"/>
    </reaction>
</comment>
<comment type="cofactor">
    <cofactor evidence="1">
        <name>a divalent metal cation</name>
        <dbReference type="ChEBI" id="CHEBI:60240"/>
    </cofactor>
</comment>
<comment type="subcellular location">
    <subcellularLocation>
        <location evidence="1">Cytoplasm</location>
    </subcellularLocation>
</comment>
<comment type="similarity">
    <text evidence="1">Belongs to the Maf family. YceF subfamily.</text>
</comment>
<name>NTPPB_VIBVY</name>
<keyword id="KW-0963">Cytoplasm</keyword>
<keyword id="KW-0378">Hydrolase</keyword>
<keyword id="KW-0546">Nucleotide metabolism</keyword>
<sequence length="194" mass="21358">MENYQLVLASTSPFRQQLLEKLAIPFSTLSPNCDETPLEDESPQQLVLRLAESKAQSCQINQPSLVIGSDQVCVINGNIVGKPHNRQNAIAQLTAQSGQSIVFYTGLAVYNSETGETRSCIDEFKVHFRPLTQAQIERYVDKEQPFYCAGSFKSEGLGIALFEKLEGKDPNTLVGLPLIDLIDLLAQQGMQVLG</sequence>
<accession>Q7MM04</accession>
<organism>
    <name type="scientific">Vibrio vulnificus (strain YJ016)</name>
    <dbReference type="NCBI Taxonomy" id="196600"/>
    <lineage>
        <taxon>Bacteria</taxon>
        <taxon>Pseudomonadati</taxon>
        <taxon>Pseudomonadota</taxon>
        <taxon>Gammaproteobacteria</taxon>
        <taxon>Vibrionales</taxon>
        <taxon>Vibrionaceae</taxon>
        <taxon>Vibrio</taxon>
    </lineage>
</organism>
<evidence type="ECO:0000255" key="1">
    <source>
        <dbReference type="HAMAP-Rule" id="MF_00528"/>
    </source>
</evidence>
<feature type="chain" id="PRO_0000123075" description="7-methyl-GTP pyrophosphatase">
    <location>
        <begin position="1"/>
        <end position="194"/>
    </location>
</feature>
<feature type="active site" description="Proton acceptor" evidence="1">
    <location>
        <position position="70"/>
    </location>
</feature>
<feature type="site" description="Important for substrate specificity" evidence="1">
    <location>
        <position position="14"/>
    </location>
</feature>
<feature type="site" description="Important for substrate specificity" evidence="1">
    <location>
        <position position="71"/>
    </location>
</feature>
<feature type="site" description="Important for substrate specificity" evidence="1">
    <location>
        <position position="155"/>
    </location>
</feature>
<reference key="1">
    <citation type="journal article" date="2003" name="Genome Res.">
        <title>Comparative genome analysis of Vibrio vulnificus, a marine pathogen.</title>
        <authorList>
            <person name="Chen C.-Y."/>
            <person name="Wu K.-M."/>
            <person name="Chang Y.-C."/>
            <person name="Chang C.-H."/>
            <person name="Tsai H.-C."/>
            <person name="Liao T.-L."/>
            <person name="Liu Y.-M."/>
            <person name="Chen H.-J."/>
            <person name="Shen A.B.-T."/>
            <person name="Li J.-C."/>
            <person name="Su T.-L."/>
            <person name="Shao C.-P."/>
            <person name="Lee C.-T."/>
            <person name="Hor L.-I."/>
            <person name="Tsai S.-F."/>
        </authorList>
    </citation>
    <scope>NUCLEOTIDE SEQUENCE [LARGE SCALE GENOMIC DNA]</scope>
    <source>
        <strain>YJ016</strain>
    </source>
</reference>
<protein>
    <recommendedName>
        <fullName evidence="1">7-methyl-GTP pyrophosphatase</fullName>
        <shortName evidence="1">m(7)GTP pyrophosphatase</shortName>
        <ecNumber evidence="1">3.6.1.-</ecNumber>
    </recommendedName>
</protein>